<organism>
    <name type="scientific">Wolbachia pipientis wMel</name>
    <dbReference type="NCBI Taxonomy" id="163164"/>
    <lineage>
        <taxon>Bacteria</taxon>
        <taxon>Pseudomonadati</taxon>
        <taxon>Pseudomonadota</taxon>
        <taxon>Alphaproteobacteria</taxon>
        <taxon>Rickettsiales</taxon>
        <taxon>Anaplasmataceae</taxon>
        <taxon>Wolbachieae</taxon>
        <taxon>Wolbachia</taxon>
    </lineage>
</organism>
<protein>
    <recommendedName>
        <fullName evidence="1">Polyribonucleotide nucleotidyltransferase</fullName>
        <ecNumber evidence="1">2.7.7.8</ecNumber>
    </recommendedName>
    <alternativeName>
        <fullName evidence="1">Polynucleotide phosphorylase</fullName>
        <shortName evidence="1">PNPase</shortName>
    </alternativeName>
</protein>
<accession>Q73GN4</accession>
<keyword id="KW-0963">Cytoplasm</keyword>
<keyword id="KW-0460">Magnesium</keyword>
<keyword id="KW-0479">Metal-binding</keyword>
<keyword id="KW-0548">Nucleotidyltransferase</keyword>
<keyword id="KW-0694">RNA-binding</keyword>
<keyword id="KW-0808">Transferase</keyword>
<evidence type="ECO:0000255" key="1">
    <source>
        <dbReference type="HAMAP-Rule" id="MF_01595"/>
    </source>
</evidence>
<evidence type="ECO:0000256" key="2">
    <source>
        <dbReference type="SAM" id="MobiDB-lite"/>
    </source>
</evidence>
<dbReference type="EC" id="2.7.7.8" evidence="1"/>
<dbReference type="EMBL" id="AE017196">
    <property type="protein sequence ID" value="AAS14582.1"/>
    <property type="molecule type" value="Genomic_DNA"/>
</dbReference>
<dbReference type="RefSeq" id="WP_010962918.1">
    <property type="nucleotide sequence ID" value="NZ_OX384529.1"/>
</dbReference>
<dbReference type="SMR" id="Q73GN4"/>
<dbReference type="EnsemblBacteria" id="AAS14582">
    <property type="protein sequence ID" value="AAS14582"/>
    <property type="gene ID" value="WD_0906"/>
</dbReference>
<dbReference type="GeneID" id="70036382"/>
<dbReference type="KEGG" id="wol:WD_0906"/>
<dbReference type="eggNOG" id="COG1185">
    <property type="taxonomic scope" value="Bacteria"/>
</dbReference>
<dbReference type="Proteomes" id="UP000008215">
    <property type="component" value="Chromosome"/>
</dbReference>
<dbReference type="GO" id="GO:0005829">
    <property type="term" value="C:cytosol"/>
    <property type="evidence" value="ECO:0007669"/>
    <property type="project" value="TreeGrafter"/>
</dbReference>
<dbReference type="GO" id="GO:0000175">
    <property type="term" value="F:3'-5'-RNA exonuclease activity"/>
    <property type="evidence" value="ECO:0007669"/>
    <property type="project" value="TreeGrafter"/>
</dbReference>
<dbReference type="GO" id="GO:0000287">
    <property type="term" value="F:magnesium ion binding"/>
    <property type="evidence" value="ECO:0007669"/>
    <property type="project" value="UniProtKB-UniRule"/>
</dbReference>
<dbReference type="GO" id="GO:0004654">
    <property type="term" value="F:polyribonucleotide nucleotidyltransferase activity"/>
    <property type="evidence" value="ECO:0007669"/>
    <property type="project" value="UniProtKB-UniRule"/>
</dbReference>
<dbReference type="GO" id="GO:0003723">
    <property type="term" value="F:RNA binding"/>
    <property type="evidence" value="ECO:0007669"/>
    <property type="project" value="UniProtKB-UniRule"/>
</dbReference>
<dbReference type="GO" id="GO:0006402">
    <property type="term" value="P:mRNA catabolic process"/>
    <property type="evidence" value="ECO:0007669"/>
    <property type="project" value="UniProtKB-UniRule"/>
</dbReference>
<dbReference type="GO" id="GO:0006396">
    <property type="term" value="P:RNA processing"/>
    <property type="evidence" value="ECO:0007669"/>
    <property type="project" value="InterPro"/>
</dbReference>
<dbReference type="CDD" id="cd02393">
    <property type="entry name" value="KH-I_PNPase"/>
    <property type="match status" value="1"/>
</dbReference>
<dbReference type="CDD" id="cd11363">
    <property type="entry name" value="RNase_PH_PNPase_1"/>
    <property type="match status" value="1"/>
</dbReference>
<dbReference type="CDD" id="cd11364">
    <property type="entry name" value="RNase_PH_PNPase_2"/>
    <property type="match status" value="1"/>
</dbReference>
<dbReference type="FunFam" id="3.30.1370.10:FF:000001">
    <property type="entry name" value="Polyribonucleotide nucleotidyltransferase"/>
    <property type="match status" value="1"/>
</dbReference>
<dbReference type="FunFam" id="3.30.230.70:FF:000001">
    <property type="entry name" value="Polyribonucleotide nucleotidyltransferase"/>
    <property type="match status" value="1"/>
</dbReference>
<dbReference type="FunFam" id="3.30.230.70:FF:000002">
    <property type="entry name" value="Polyribonucleotide nucleotidyltransferase"/>
    <property type="match status" value="1"/>
</dbReference>
<dbReference type="Gene3D" id="3.30.230.70">
    <property type="entry name" value="GHMP Kinase, N-terminal domain"/>
    <property type="match status" value="2"/>
</dbReference>
<dbReference type="Gene3D" id="3.30.1370.10">
    <property type="entry name" value="K Homology domain, type 1"/>
    <property type="match status" value="1"/>
</dbReference>
<dbReference type="Gene3D" id="2.40.50.140">
    <property type="entry name" value="Nucleic acid-binding proteins"/>
    <property type="match status" value="1"/>
</dbReference>
<dbReference type="HAMAP" id="MF_01595">
    <property type="entry name" value="PNPase"/>
    <property type="match status" value="1"/>
</dbReference>
<dbReference type="InterPro" id="IPR001247">
    <property type="entry name" value="ExoRNase_PH_dom1"/>
</dbReference>
<dbReference type="InterPro" id="IPR015847">
    <property type="entry name" value="ExoRNase_PH_dom2"/>
</dbReference>
<dbReference type="InterPro" id="IPR036345">
    <property type="entry name" value="ExoRNase_PH_dom2_sf"/>
</dbReference>
<dbReference type="InterPro" id="IPR004087">
    <property type="entry name" value="KH_dom"/>
</dbReference>
<dbReference type="InterPro" id="IPR004088">
    <property type="entry name" value="KH_dom_type_1"/>
</dbReference>
<dbReference type="InterPro" id="IPR036612">
    <property type="entry name" value="KH_dom_type_1_sf"/>
</dbReference>
<dbReference type="InterPro" id="IPR012340">
    <property type="entry name" value="NA-bd_OB-fold"/>
</dbReference>
<dbReference type="InterPro" id="IPR012162">
    <property type="entry name" value="PNPase"/>
</dbReference>
<dbReference type="InterPro" id="IPR027408">
    <property type="entry name" value="PNPase/RNase_PH_dom_sf"/>
</dbReference>
<dbReference type="InterPro" id="IPR015848">
    <property type="entry name" value="PNPase_PH_RNA-bd_bac/org-type"/>
</dbReference>
<dbReference type="InterPro" id="IPR020568">
    <property type="entry name" value="Ribosomal_Su5_D2-typ_SF"/>
</dbReference>
<dbReference type="InterPro" id="IPR003029">
    <property type="entry name" value="S1_domain"/>
</dbReference>
<dbReference type="NCBIfam" id="TIGR03591">
    <property type="entry name" value="polynuc_phos"/>
    <property type="match status" value="1"/>
</dbReference>
<dbReference type="NCBIfam" id="NF008805">
    <property type="entry name" value="PRK11824.1"/>
    <property type="match status" value="1"/>
</dbReference>
<dbReference type="PANTHER" id="PTHR11252">
    <property type="entry name" value="POLYRIBONUCLEOTIDE NUCLEOTIDYLTRANSFERASE"/>
    <property type="match status" value="1"/>
</dbReference>
<dbReference type="PANTHER" id="PTHR11252:SF0">
    <property type="entry name" value="POLYRIBONUCLEOTIDE NUCLEOTIDYLTRANSFERASE 1, MITOCHONDRIAL"/>
    <property type="match status" value="1"/>
</dbReference>
<dbReference type="Pfam" id="PF00013">
    <property type="entry name" value="KH_1"/>
    <property type="match status" value="1"/>
</dbReference>
<dbReference type="Pfam" id="PF03726">
    <property type="entry name" value="PNPase"/>
    <property type="match status" value="1"/>
</dbReference>
<dbReference type="Pfam" id="PF01138">
    <property type="entry name" value="RNase_PH"/>
    <property type="match status" value="2"/>
</dbReference>
<dbReference type="Pfam" id="PF03725">
    <property type="entry name" value="RNase_PH_C"/>
    <property type="match status" value="2"/>
</dbReference>
<dbReference type="Pfam" id="PF00575">
    <property type="entry name" value="S1"/>
    <property type="match status" value="1"/>
</dbReference>
<dbReference type="PIRSF" id="PIRSF005499">
    <property type="entry name" value="PNPase"/>
    <property type="match status" value="1"/>
</dbReference>
<dbReference type="SMART" id="SM00322">
    <property type="entry name" value="KH"/>
    <property type="match status" value="1"/>
</dbReference>
<dbReference type="SMART" id="SM00316">
    <property type="entry name" value="S1"/>
    <property type="match status" value="1"/>
</dbReference>
<dbReference type="SUPFAM" id="SSF54791">
    <property type="entry name" value="Eukaryotic type KH-domain (KH-domain type I)"/>
    <property type="match status" value="1"/>
</dbReference>
<dbReference type="SUPFAM" id="SSF50249">
    <property type="entry name" value="Nucleic acid-binding proteins"/>
    <property type="match status" value="1"/>
</dbReference>
<dbReference type="SUPFAM" id="SSF55666">
    <property type="entry name" value="Ribonuclease PH domain 2-like"/>
    <property type="match status" value="2"/>
</dbReference>
<dbReference type="SUPFAM" id="SSF54211">
    <property type="entry name" value="Ribosomal protein S5 domain 2-like"/>
    <property type="match status" value="2"/>
</dbReference>
<dbReference type="PROSITE" id="PS50084">
    <property type="entry name" value="KH_TYPE_1"/>
    <property type="match status" value="1"/>
</dbReference>
<dbReference type="PROSITE" id="PS50126">
    <property type="entry name" value="S1"/>
    <property type="match status" value="1"/>
</dbReference>
<gene>
    <name evidence="1" type="primary">pnp</name>
    <name type="ordered locus">WD_0906</name>
</gene>
<sequence length="757" mass="84015">MFKIIKKSIEWGGRALSLETGKIARQAHGSVVVNYGDTSVLVTVVRKKKEESVDFLPLNVQFIAKSYAMGKIPGGFFKREGKPSDRETLISRVIDRSIRPLFPEGFHDEISVVCNLLTYDTVNPPEVPALIGAVAALAISGVPFHFTIAGVMVGCDENNNYILNPSVQEMKASSLDLFLSGDENSILMVESEVKELSEENVFNAIKFGHEHLKPVIKLIKEFADTIGNKPESFAPIDASDITQELEKYGKDFEKAYSQTVKQERVQALEAIRENILNTLKETGKDEKLITYAVKNFERSLVREIIRKKSVRIDGRKHDEIRQIEVEVDILSKTHGSALFTRGNTQALVVTALGTTQDEQIVDDIEGDRREHFMLHYNFPSFAVGETSAARAPGRREIGHGKLAWKAIHPVLPDKSEFPYTIRVVSEILESDGSSSMATVCGTSLALMDTGVPIKAPVAGIAMGLIKDKDEYVILSDILGDEDYLGDMDFKVAGTSEGVTALQMDMKISGISFEIVEKSLEQAKAGRLHILEKMNAVISEHSDDVKDHAPRMLSFYIDKDKISAAIGSKGKNIRSVCERSNAKIEIGDDGKVSVFATSGTEAEIAKSMMIDSITELEQGSIVDVKVVRIEKSIVELEFLNGRKGKMHISEVANEHIDSIESVLKQDDTFKALVIDFEKGGCPKLSRRRVDQETGEFFEGELYNEERKDGPNDRDNYYNNSFSRKPGGSHHKRPPRPHSGFSNRNRPKFGNNDSSSGFY</sequence>
<name>PNP_WOLPM</name>
<comment type="function">
    <text evidence="1">Involved in mRNA degradation. Catalyzes the phosphorolysis of single-stranded polyribonucleotides processively in the 3'- to 5'-direction.</text>
</comment>
<comment type="catalytic activity">
    <reaction evidence="1">
        <text>RNA(n+1) + phosphate = RNA(n) + a ribonucleoside 5'-diphosphate</text>
        <dbReference type="Rhea" id="RHEA:22096"/>
        <dbReference type="Rhea" id="RHEA-COMP:14527"/>
        <dbReference type="Rhea" id="RHEA-COMP:17342"/>
        <dbReference type="ChEBI" id="CHEBI:43474"/>
        <dbReference type="ChEBI" id="CHEBI:57930"/>
        <dbReference type="ChEBI" id="CHEBI:140395"/>
        <dbReference type="EC" id="2.7.7.8"/>
    </reaction>
</comment>
<comment type="cofactor">
    <cofactor evidence="1">
        <name>Mg(2+)</name>
        <dbReference type="ChEBI" id="CHEBI:18420"/>
    </cofactor>
</comment>
<comment type="subcellular location">
    <subcellularLocation>
        <location evidence="1">Cytoplasm</location>
    </subcellularLocation>
</comment>
<comment type="similarity">
    <text evidence="1">Belongs to the polyribonucleotide nucleotidyltransferase family.</text>
</comment>
<feature type="chain" id="PRO_0000329935" description="Polyribonucleotide nucleotidyltransferase">
    <location>
        <begin position="1"/>
        <end position="757"/>
    </location>
</feature>
<feature type="domain" description="KH" evidence="1">
    <location>
        <begin position="549"/>
        <end position="608"/>
    </location>
</feature>
<feature type="domain" description="S1 motif" evidence="1">
    <location>
        <begin position="618"/>
        <end position="686"/>
    </location>
</feature>
<feature type="region of interest" description="Disordered" evidence="2">
    <location>
        <begin position="698"/>
        <end position="757"/>
    </location>
</feature>
<feature type="compositionally biased region" description="Basic and acidic residues" evidence="2">
    <location>
        <begin position="702"/>
        <end position="714"/>
    </location>
</feature>
<feature type="compositionally biased region" description="Basic residues" evidence="2">
    <location>
        <begin position="725"/>
        <end position="734"/>
    </location>
</feature>
<feature type="binding site" evidence="1">
    <location>
        <position position="482"/>
    </location>
    <ligand>
        <name>Mg(2+)</name>
        <dbReference type="ChEBI" id="CHEBI:18420"/>
    </ligand>
</feature>
<feature type="binding site" evidence="1">
    <location>
        <position position="488"/>
    </location>
    <ligand>
        <name>Mg(2+)</name>
        <dbReference type="ChEBI" id="CHEBI:18420"/>
    </ligand>
</feature>
<reference key="1">
    <citation type="journal article" date="2004" name="PLoS Biol.">
        <title>Phylogenomics of the reproductive parasite Wolbachia pipientis wMel: a streamlined genome overrun by mobile genetic elements.</title>
        <authorList>
            <person name="Wu M."/>
            <person name="Sun L.V."/>
            <person name="Vamathevan J.J."/>
            <person name="Riegler M."/>
            <person name="DeBoy R.T."/>
            <person name="Brownlie J.C."/>
            <person name="McGraw E.A."/>
            <person name="Martin W."/>
            <person name="Esser C."/>
            <person name="Ahmadinejad N."/>
            <person name="Wiegand C."/>
            <person name="Madupu R."/>
            <person name="Beanan M.J."/>
            <person name="Brinkac L.M."/>
            <person name="Daugherty S.C."/>
            <person name="Durkin A.S."/>
            <person name="Kolonay J.F."/>
            <person name="Nelson W.C."/>
            <person name="Mohamoud Y."/>
            <person name="Lee P."/>
            <person name="Berry K.J."/>
            <person name="Young M.B."/>
            <person name="Utterback T.R."/>
            <person name="Weidman J.F."/>
            <person name="Nierman W.C."/>
            <person name="Paulsen I.T."/>
            <person name="Nelson K.E."/>
            <person name="Tettelin H."/>
            <person name="O'Neill S.L."/>
            <person name="Eisen J.A."/>
        </authorList>
    </citation>
    <scope>NUCLEOTIDE SEQUENCE [LARGE SCALE GENOMIC DNA]</scope>
</reference>
<proteinExistence type="inferred from homology"/>